<gene>
    <name evidence="1" type="primary">dbh</name>
    <name type="ordered locus">STK_05730</name>
</gene>
<name>DPO4_SULTO</name>
<evidence type="ECO:0000255" key="1">
    <source>
        <dbReference type="HAMAP-Rule" id="MF_01113"/>
    </source>
</evidence>
<comment type="function">
    <text evidence="1">Poorly processive, error-prone DNA polymerase involved in untargeted mutagenesis. Copies undamaged DNA at stalled replication forks, which arise in vivo from mismatched or misaligned primer ends. These misaligned primers can be extended by PolIV. Exhibits no 3'-5' exonuclease (proofreading) activity. May be involved in translesional synthesis.</text>
</comment>
<comment type="catalytic activity">
    <reaction evidence="1">
        <text>DNA(n) + a 2'-deoxyribonucleoside 5'-triphosphate = DNA(n+1) + diphosphate</text>
        <dbReference type="Rhea" id="RHEA:22508"/>
        <dbReference type="Rhea" id="RHEA-COMP:17339"/>
        <dbReference type="Rhea" id="RHEA-COMP:17340"/>
        <dbReference type="ChEBI" id="CHEBI:33019"/>
        <dbReference type="ChEBI" id="CHEBI:61560"/>
        <dbReference type="ChEBI" id="CHEBI:173112"/>
        <dbReference type="EC" id="2.7.7.7"/>
    </reaction>
</comment>
<comment type="cofactor">
    <cofactor evidence="1">
        <name>Mg(2+)</name>
        <dbReference type="ChEBI" id="CHEBI:18420"/>
    </cofactor>
    <text evidence="1">Binds 2 magnesium ions per subunit.</text>
</comment>
<comment type="similarity">
    <text evidence="1">Belongs to the DNA polymerase type-Y family.</text>
</comment>
<accession>Q974T8</accession>
<accession>F9VN37</accession>
<reference key="1">
    <citation type="journal article" date="2001" name="DNA Res.">
        <title>Complete genome sequence of an aerobic thermoacidophilic Crenarchaeon, Sulfolobus tokodaii strain7.</title>
        <authorList>
            <person name="Kawarabayasi Y."/>
            <person name="Hino Y."/>
            <person name="Horikawa H."/>
            <person name="Jin-no K."/>
            <person name="Takahashi M."/>
            <person name="Sekine M."/>
            <person name="Baba S."/>
            <person name="Ankai A."/>
            <person name="Kosugi H."/>
            <person name="Hosoyama A."/>
            <person name="Fukui S."/>
            <person name="Nagai Y."/>
            <person name="Nishijima K."/>
            <person name="Otsuka R."/>
            <person name="Nakazawa H."/>
            <person name="Takamiya M."/>
            <person name="Kato Y."/>
            <person name="Yoshizawa T."/>
            <person name="Tanaka T."/>
            <person name="Kudoh Y."/>
            <person name="Yamazaki J."/>
            <person name="Kushida N."/>
            <person name="Oguchi A."/>
            <person name="Aoki K."/>
            <person name="Masuda S."/>
            <person name="Yanagii M."/>
            <person name="Nishimura M."/>
            <person name="Yamagishi A."/>
            <person name="Oshima T."/>
            <person name="Kikuchi H."/>
        </authorList>
    </citation>
    <scope>NUCLEOTIDE SEQUENCE [LARGE SCALE GENOMIC DNA]</scope>
    <source>
        <strain>DSM 16993 / JCM 10545 / NBRC 100140 / 7</strain>
    </source>
</reference>
<sequence length="351" mass="39831">MIILFVDFDYFFAQVEEVLNPQYKGKPLIVCVYSGRNEKSGAVATANYEARKLGVKAGMPISRAMELAPNAIFVPMHKEVYTEVSNRIMSIISSYSDKIEIASIDEAYIDITSKVKNFEEAIELGKKLKREIMEKEKITVTVGIAPNKVFAKIIADRVKPNGLGVVKPEEIEEFIKSIDIDEVPGVGNVISERLHSLGVNKLIDILSVSFDKLKEEIGEAKAFYLYRLATNSYFEPVLNKERVPHGRYLTLPKNTRDIKVIELYLKKAIDEAYNKIEGIPKRMTVVTIMQDLDIVSKSKTFKTGISKERAYTESIELLKQILQKDSRLVRRVGVRFDNIYKSKGLDVFFNS</sequence>
<organism>
    <name type="scientific">Sulfurisphaera tokodaii (strain DSM 16993 / JCM 10545 / NBRC 100140 / 7)</name>
    <name type="common">Sulfolobus tokodaii</name>
    <dbReference type="NCBI Taxonomy" id="273063"/>
    <lineage>
        <taxon>Archaea</taxon>
        <taxon>Thermoproteota</taxon>
        <taxon>Thermoprotei</taxon>
        <taxon>Sulfolobales</taxon>
        <taxon>Sulfolobaceae</taxon>
        <taxon>Sulfurisphaera</taxon>
    </lineage>
</organism>
<protein>
    <recommendedName>
        <fullName evidence="1">DNA polymerase IV</fullName>
        <shortName evidence="1">Pol IV</shortName>
        <ecNumber evidence="1">2.7.7.7</ecNumber>
    </recommendedName>
</protein>
<keyword id="KW-0227">DNA damage</keyword>
<keyword id="KW-0234">DNA repair</keyword>
<keyword id="KW-0235">DNA replication</keyword>
<keyword id="KW-0238">DNA-binding</keyword>
<keyword id="KW-0239">DNA-directed DNA polymerase</keyword>
<keyword id="KW-0460">Magnesium</keyword>
<keyword id="KW-0479">Metal-binding</keyword>
<keyword id="KW-0515">Mutator protein</keyword>
<keyword id="KW-0548">Nucleotidyltransferase</keyword>
<keyword id="KW-1185">Reference proteome</keyword>
<keyword id="KW-0808">Transferase</keyword>
<feature type="chain" id="PRO_0000173977" description="DNA polymerase IV">
    <location>
        <begin position="1"/>
        <end position="351"/>
    </location>
</feature>
<feature type="domain" description="UmuC" evidence="1">
    <location>
        <begin position="3"/>
        <end position="187"/>
    </location>
</feature>
<feature type="active site" evidence="1">
    <location>
        <position position="106"/>
    </location>
</feature>
<feature type="binding site" evidence="1">
    <location>
        <position position="7"/>
    </location>
    <ligand>
        <name>Mg(2+)</name>
        <dbReference type="ChEBI" id="CHEBI:18420"/>
    </ligand>
</feature>
<feature type="binding site" evidence="1">
    <location>
        <position position="105"/>
    </location>
    <ligand>
        <name>Mg(2+)</name>
        <dbReference type="ChEBI" id="CHEBI:18420"/>
    </ligand>
</feature>
<feature type="site" description="Substrate discrimination" evidence="1">
    <location>
        <position position="12"/>
    </location>
</feature>
<proteinExistence type="inferred from homology"/>
<dbReference type="EC" id="2.7.7.7" evidence="1"/>
<dbReference type="EMBL" id="BA000023">
    <property type="protein sequence ID" value="BAK54334.1"/>
    <property type="molecule type" value="Genomic_DNA"/>
</dbReference>
<dbReference type="RefSeq" id="WP_052846370.1">
    <property type="nucleotide sequence ID" value="NC_003106.2"/>
</dbReference>
<dbReference type="SMR" id="Q974T8"/>
<dbReference type="STRING" id="273063.STK_05730"/>
<dbReference type="GeneID" id="1458519"/>
<dbReference type="KEGG" id="sto:STK_05730"/>
<dbReference type="PATRIC" id="fig|273063.9.peg.654"/>
<dbReference type="eggNOG" id="arCOG04582">
    <property type="taxonomic scope" value="Archaea"/>
</dbReference>
<dbReference type="OrthoDB" id="372207at2157"/>
<dbReference type="Proteomes" id="UP000001015">
    <property type="component" value="Chromosome"/>
</dbReference>
<dbReference type="GO" id="GO:0005737">
    <property type="term" value="C:cytoplasm"/>
    <property type="evidence" value="ECO:0007669"/>
    <property type="project" value="UniProtKB-UniRule"/>
</dbReference>
<dbReference type="GO" id="GO:0003684">
    <property type="term" value="F:damaged DNA binding"/>
    <property type="evidence" value="ECO:0007669"/>
    <property type="project" value="InterPro"/>
</dbReference>
<dbReference type="GO" id="GO:0003887">
    <property type="term" value="F:DNA-directed DNA polymerase activity"/>
    <property type="evidence" value="ECO:0007669"/>
    <property type="project" value="UniProtKB-UniRule"/>
</dbReference>
<dbReference type="GO" id="GO:0000287">
    <property type="term" value="F:magnesium ion binding"/>
    <property type="evidence" value="ECO:0007669"/>
    <property type="project" value="UniProtKB-UniRule"/>
</dbReference>
<dbReference type="GO" id="GO:0006261">
    <property type="term" value="P:DNA-templated DNA replication"/>
    <property type="evidence" value="ECO:0007669"/>
    <property type="project" value="UniProtKB-UniRule"/>
</dbReference>
<dbReference type="GO" id="GO:0042276">
    <property type="term" value="P:error-prone translesion synthesis"/>
    <property type="evidence" value="ECO:0007669"/>
    <property type="project" value="TreeGrafter"/>
</dbReference>
<dbReference type="CDD" id="cd03586">
    <property type="entry name" value="PolY_Pol_IV_kappa"/>
    <property type="match status" value="1"/>
</dbReference>
<dbReference type="Gene3D" id="3.30.70.270">
    <property type="match status" value="1"/>
</dbReference>
<dbReference type="Gene3D" id="3.40.1170.60">
    <property type="match status" value="1"/>
</dbReference>
<dbReference type="Gene3D" id="1.10.150.20">
    <property type="entry name" value="5' to 3' exonuclease, C-terminal subdomain"/>
    <property type="match status" value="1"/>
</dbReference>
<dbReference type="Gene3D" id="3.30.1490.100">
    <property type="entry name" value="DNA polymerase, Y-family, little finger domain"/>
    <property type="match status" value="1"/>
</dbReference>
<dbReference type="HAMAP" id="MF_01113">
    <property type="entry name" value="DNApol_IV"/>
    <property type="match status" value="1"/>
</dbReference>
<dbReference type="InterPro" id="IPR043502">
    <property type="entry name" value="DNA/RNA_pol_sf"/>
</dbReference>
<dbReference type="InterPro" id="IPR036775">
    <property type="entry name" value="DNA_pol_Y-fam_lit_finger_sf"/>
</dbReference>
<dbReference type="InterPro" id="IPR050116">
    <property type="entry name" value="DNA_polymerase-Y"/>
</dbReference>
<dbReference type="InterPro" id="IPR022880">
    <property type="entry name" value="DNApol_IV"/>
</dbReference>
<dbReference type="InterPro" id="IPR024728">
    <property type="entry name" value="PolY_HhH_motif"/>
</dbReference>
<dbReference type="InterPro" id="IPR043128">
    <property type="entry name" value="Rev_trsase/Diguanyl_cyclase"/>
</dbReference>
<dbReference type="InterPro" id="IPR001126">
    <property type="entry name" value="UmuC"/>
</dbReference>
<dbReference type="NCBIfam" id="NF002292">
    <property type="entry name" value="PRK01216.1"/>
    <property type="match status" value="1"/>
</dbReference>
<dbReference type="PANTHER" id="PTHR11076:SF33">
    <property type="entry name" value="DNA POLYMERASE KAPPA"/>
    <property type="match status" value="1"/>
</dbReference>
<dbReference type="PANTHER" id="PTHR11076">
    <property type="entry name" value="DNA REPAIR POLYMERASE UMUC / TRANSFERASE FAMILY MEMBER"/>
    <property type="match status" value="1"/>
</dbReference>
<dbReference type="Pfam" id="PF00817">
    <property type="entry name" value="IMS"/>
    <property type="match status" value="1"/>
</dbReference>
<dbReference type="Pfam" id="PF11798">
    <property type="entry name" value="IMS_HHH"/>
    <property type="match status" value="1"/>
</dbReference>
<dbReference type="SUPFAM" id="SSF56672">
    <property type="entry name" value="DNA/RNA polymerases"/>
    <property type="match status" value="1"/>
</dbReference>
<dbReference type="SUPFAM" id="SSF100879">
    <property type="entry name" value="Lesion bypass DNA polymerase (Y-family), little finger domain"/>
    <property type="match status" value="1"/>
</dbReference>
<dbReference type="PROSITE" id="PS50173">
    <property type="entry name" value="UMUC"/>
    <property type="match status" value="1"/>
</dbReference>